<keyword id="KW-1267">Proteomics identification</keyword>
<keyword id="KW-1185">Reference proteome</keyword>
<name>DP2NB_HUMAN</name>
<gene>
    <name evidence="2" type="primary">DPEP2NB</name>
</gene>
<accession>A0A0U1RQF7</accession>
<protein>
    <recommendedName>
        <fullName>DPEP2 neighbor protein</fullName>
    </recommendedName>
</protein>
<organism>
    <name type="scientific">Homo sapiens</name>
    <name type="common">Human</name>
    <dbReference type="NCBI Taxonomy" id="9606"/>
    <lineage>
        <taxon>Eukaryota</taxon>
        <taxon>Metazoa</taxon>
        <taxon>Chordata</taxon>
        <taxon>Craniata</taxon>
        <taxon>Vertebrata</taxon>
        <taxon>Euteleostomi</taxon>
        <taxon>Mammalia</taxon>
        <taxon>Eutheria</taxon>
        <taxon>Euarchontoglires</taxon>
        <taxon>Primates</taxon>
        <taxon>Haplorrhini</taxon>
        <taxon>Catarrhini</taxon>
        <taxon>Hominidae</taxon>
        <taxon>Homo</taxon>
    </lineage>
</organism>
<comment type="interaction">
    <interactant intactId="EBI-18398199">
        <id>A0A0U1RQF7</id>
    </interactant>
    <interactant intactId="EBI-742909">
        <id>Q9H6L4</id>
        <label>ARMC7</label>
    </interactant>
    <organismsDiffer>false</organismsDiffer>
    <experiments>3</experiments>
</comment>
<comment type="interaction">
    <interactant intactId="EBI-18398199">
        <id>A0A0U1RQF7</id>
    </interactant>
    <interactant intactId="EBI-12011224">
        <id>Q9NPB3</id>
        <label>CABP2</label>
    </interactant>
    <organismsDiffer>false</organismsDiffer>
    <experiments>3</experiments>
</comment>
<comment type="interaction">
    <interactant intactId="EBI-18398199">
        <id>A0A0U1RQF7</id>
    </interactant>
    <interactant intactId="EBI-747133">
        <id>P27658</id>
        <label>COL8A1</label>
    </interactant>
    <organismsDiffer>false</organismsDiffer>
    <experiments>3</experiments>
</comment>
<comment type="interaction">
    <interactant intactId="EBI-18398199">
        <id>A0A0U1RQF7</id>
    </interactant>
    <interactant intactId="EBI-725515">
        <id>O43559</id>
        <label>FRS3</label>
    </interactant>
    <organismsDiffer>false</organismsDiffer>
    <experiments>3</experiments>
</comment>
<comment type="interaction">
    <interactant intactId="EBI-18398199">
        <id>A0A0U1RQF7</id>
    </interactant>
    <interactant intactId="EBI-2556193">
        <id>Q63ZY3</id>
        <label>KANK2</label>
    </interactant>
    <organismsDiffer>false</organismsDiffer>
    <experiments>3</experiments>
</comment>
<comment type="interaction">
    <interactant intactId="EBI-18398199">
        <id>A0A0U1RQF7</id>
    </interactant>
    <interactant intactId="EBI-12135485">
        <id>P41271-2</id>
        <label>NBL1</label>
    </interactant>
    <organismsDiffer>false</organismsDiffer>
    <experiments>3</experiments>
</comment>
<comment type="interaction">
    <interactant intactId="EBI-18398199">
        <id>A0A0U1RQF7</id>
    </interactant>
    <interactant intactId="EBI-3650647">
        <id>Q9BUZ4</id>
        <label>TRAF4</label>
    </interactant>
    <organismsDiffer>false</organismsDiffer>
    <experiments>3</experiments>
</comment>
<comment type="interaction">
    <interactant intactId="EBI-18398199">
        <id>A0A0U1RQF7</id>
    </interactant>
    <interactant intactId="EBI-11741890">
        <id>Q86VK4-3</id>
        <label>ZNF410</label>
    </interactant>
    <organismsDiffer>false</organismsDiffer>
    <experiments>3</experiments>
</comment>
<feature type="chain" id="PRO_0000444871" description="DPEP2 neighbor protein">
    <location>
        <begin position="1"/>
        <end position="123"/>
    </location>
</feature>
<feature type="region of interest" description="Disordered" evidence="1">
    <location>
        <begin position="67"/>
        <end position="123"/>
    </location>
</feature>
<feature type="compositionally biased region" description="Basic residues" evidence="1">
    <location>
        <begin position="105"/>
        <end position="117"/>
    </location>
</feature>
<proteinExistence type="evidence at protein level"/>
<sequence>MTDRILYIVSNMSSVPWEGSAAAAVPATSPPTPGHYHVLYRGCGETQVGWHGETYCLVGGYRVHGDAPLATPTKAEAEKPAPRRAPKRRQATIESDKDLGCSSPKIRRLEHRGRRLTPQKLAG</sequence>
<evidence type="ECO:0000256" key="1">
    <source>
        <dbReference type="SAM" id="MobiDB-lite"/>
    </source>
</evidence>
<evidence type="ECO:0000312" key="2">
    <source>
        <dbReference type="HGNC" id="HGNC:52385"/>
    </source>
</evidence>
<reference key="1">
    <citation type="submission" date="2002-12" db="EMBL/GenBank/DDBJ databases">
        <title>Cloning of human full open reading frames in Gateway(TM) system entry vector (pDONR201).</title>
        <authorList>
            <person name="Ebert L."/>
            <person name="Schick M."/>
            <person name="Neubert P."/>
            <person name="Schatten R."/>
            <person name="Henze S."/>
            <person name="Korn B."/>
        </authorList>
    </citation>
    <scope>NUCLEOTIDE SEQUENCE [LARGE SCALE MRNA]</scope>
</reference>
<reference key="2">
    <citation type="journal article" date="2004" name="Nature">
        <title>The sequence and analysis of duplication-rich human chromosome 16.</title>
        <authorList>
            <person name="Martin J."/>
            <person name="Han C."/>
            <person name="Gordon L.A."/>
            <person name="Terry A."/>
            <person name="Prabhakar S."/>
            <person name="She X."/>
            <person name="Xie G."/>
            <person name="Hellsten U."/>
            <person name="Chan Y.M."/>
            <person name="Altherr M."/>
            <person name="Couronne O."/>
            <person name="Aerts A."/>
            <person name="Bajorek E."/>
            <person name="Black S."/>
            <person name="Blumer H."/>
            <person name="Branscomb E."/>
            <person name="Brown N.C."/>
            <person name="Bruno W.J."/>
            <person name="Buckingham J.M."/>
            <person name="Callen D.F."/>
            <person name="Campbell C.S."/>
            <person name="Campbell M.L."/>
            <person name="Campbell E.W."/>
            <person name="Caoile C."/>
            <person name="Challacombe J.F."/>
            <person name="Chasteen L.A."/>
            <person name="Chertkov O."/>
            <person name="Chi H.C."/>
            <person name="Christensen M."/>
            <person name="Clark L.M."/>
            <person name="Cohn J.D."/>
            <person name="Denys M."/>
            <person name="Detter J.C."/>
            <person name="Dickson M."/>
            <person name="Dimitrijevic-Bussod M."/>
            <person name="Escobar J."/>
            <person name="Fawcett J.J."/>
            <person name="Flowers D."/>
            <person name="Fotopulos D."/>
            <person name="Glavina T."/>
            <person name="Gomez M."/>
            <person name="Gonzales E."/>
            <person name="Goodstein D."/>
            <person name="Goodwin L.A."/>
            <person name="Grady D.L."/>
            <person name="Grigoriev I."/>
            <person name="Groza M."/>
            <person name="Hammon N."/>
            <person name="Hawkins T."/>
            <person name="Haydu L."/>
            <person name="Hildebrand C.E."/>
            <person name="Huang W."/>
            <person name="Israni S."/>
            <person name="Jett J."/>
            <person name="Jewett P.B."/>
            <person name="Kadner K."/>
            <person name="Kimball H."/>
            <person name="Kobayashi A."/>
            <person name="Krawczyk M.-C."/>
            <person name="Leyba T."/>
            <person name="Longmire J.L."/>
            <person name="Lopez F."/>
            <person name="Lou Y."/>
            <person name="Lowry S."/>
            <person name="Ludeman T."/>
            <person name="Manohar C.F."/>
            <person name="Mark G.A."/>
            <person name="McMurray K.L."/>
            <person name="Meincke L.J."/>
            <person name="Morgan J."/>
            <person name="Moyzis R.K."/>
            <person name="Mundt M.O."/>
            <person name="Munk A.C."/>
            <person name="Nandkeshwar R.D."/>
            <person name="Pitluck S."/>
            <person name="Pollard M."/>
            <person name="Predki P."/>
            <person name="Parson-Quintana B."/>
            <person name="Ramirez L."/>
            <person name="Rash S."/>
            <person name="Retterer J."/>
            <person name="Ricke D.O."/>
            <person name="Robinson D.L."/>
            <person name="Rodriguez A."/>
            <person name="Salamov A."/>
            <person name="Saunders E.H."/>
            <person name="Scott D."/>
            <person name="Shough T."/>
            <person name="Stallings R.L."/>
            <person name="Stalvey M."/>
            <person name="Sutherland R.D."/>
            <person name="Tapia R."/>
            <person name="Tesmer J.G."/>
            <person name="Thayer N."/>
            <person name="Thompson L.S."/>
            <person name="Tice H."/>
            <person name="Torney D.C."/>
            <person name="Tran-Gyamfi M."/>
            <person name="Tsai M."/>
            <person name="Ulanovsky L.E."/>
            <person name="Ustaszewska A."/>
            <person name="Vo N."/>
            <person name="White P.S."/>
            <person name="Williams A.L."/>
            <person name="Wills P.L."/>
            <person name="Wu J.-R."/>
            <person name="Wu K."/>
            <person name="Yang J."/>
            <person name="DeJong P."/>
            <person name="Bruce D."/>
            <person name="Doggett N.A."/>
            <person name="Deaven L."/>
            <person name="Schmutz J."/>
            <person name="Grimwood J."/>
            <person name="Richardson P."/>
            <person name="Rokhsar D.S."/>
            <person name="Eichler E.E."/>
            <person name="Gilna P."/>
            <person name="Lucas S.M."/>
            <person name="Myers R.M."/>
            <person name="Rubin E.M."/>
            <person name="Pennacchio L.A."/>
        </authorList>
    </citation>
    <scope>NUCLEOTIDE SEQUENCE [LARGE SCALE GENOMIC DNA]</scope>
</reference>
<reference key="3">
    <citation type="submission" date="2005-07" db="EMBL/GenBank/DDBJ databases">
        <authorList>
            <person name="Mural R.J."/>
            <person name="Istrail S."/>
            <person name="Sutton G.G."/>
            <person name="Florea L."/>
            <person name="Halpern A.L."/>
            <person name="Mobarry C.M."/>
            <person name="Lippert R."/>
            <person name="Walenz B."/>
            <person name="Shatkay H."/>
            <person name="Dew I."/>
            <person name="Miller J.R."/>
            <person name="Flanigan M.J."/>
            <person name="Edwards N.J."/>
            <person name="Bolanos R."/>
            <person name="Fasulo D."/>
            <person name="Halldorsson B.V."/>
            <person name="Hannenhalli S."/>
            <person name="Turner R."/>
            <person name="Yooseph S."/>
            <person name="Lu F."/>
            <person name="Nusskern D.R."/>
            <person name="Shue B.C."/>
            <person name="Zheng X.H."/>
            <person name="Zhong F."/>
            <person name="Delcher A.L."/>
            <person name="Huson D.H."/>
            <person name="Kravitz S.A."/>
            <person name="Mouchard L."/>
            <person name="Reinert K."/>
            <person name="Remington K.A."/>
            <person name="Clark A.G."/>
            <person name="Waterman M.S."/>
            <person name="Eichler E.E."/>
            <person name="Adams M.D."/>
            <person name="Hunkapiller M.W."/>
            <person name="Myers E.W."/>
            <person name="Venter J.C."/>
        </authorList>
    </citation>
    <scope>NUCLEOTIDE SEQUENCE [LARGE SCALE GENOMIC DNA]</scope>
</reference>
<dbReference type="EMBL" id="BX107720">
    <property type="status" value="NOT_ANNOTATED_CDS"/>
    <property type="molecule type" value="mRNA"/>
</dbReference>
<dbReference type="EMBL" id="AC040162">
    <property type="status" value="NOT_ANNOTATED_CDS"/>
    <property type="molecule type" value="Genomic_DNA"/>
</dbReference>
<dbReference type="EMBL" id="AC130462">
    <property type="status" value="NOT_ANNOTATED_CDS"/>
    <property type="molecule type" value="Genomic_DNA"/>
</dbReference>
<dbReference type="EMBL" id="CH471092">
    <property type="protein sequence ID" value="EAW83205.1"/>
    <property type="molecule type" value="Genomic_DNA"/>
</dbReference>
<dbReference type="CCDS" id="CCDS82001.1"/>
<dbReference type="RefSeq" id="NP_001269371.1">
    <property type="nucleotide sequence ID" value="NM_001282442.2"/>
</dbReference>
<dbReference type="FunCoup" id="A0A0U1RQF7">
    <property type="interactions" value="2"/>
</dbReference>
<dbReference type="IntAct" id="A0A0U1RQF7">
    <property type="interactions" value="8"/>
</dbReference>
<dbReference type="GlyGen" id="A0A0U1RQF7">
    <property type="glycosylation" value="1 site"/>
</dbReference>
<dbReference type="BioMuta" id="ENSG00000263201"/>
<dbReference type="MassIVE" id="A0A0U1RQF7"/>
<dbReference type="PeptideAtlas" id="A0A0U1RQF7"/>
<dbReference type="DNASU" id="100131303"/>
<dbReference type="Ensembl" id="ENST00000574912.1">
    <property type="protein sequence ID" value="ENSP00000488973.1"/>
    <property type="gene ID" value="ENSG00000263201.1"/>
</dbReference>
<dbReference type="GeneID" id="100131303"/>
<dbReference type="KEGG" id="hsa:100131303"/>
<dbReference type="MANE-Select" id="ENST00000574912.1">
    <property type="protein sequence ID" value="ENSP00000488973.1"/>
    <property type="RefSeq nucleotide sequence ID" value="NM_001282442.2"/>
    <property type="RefSeq protein sequence ID" value="NP_001269371.1"/>
</dbReference>
<dbReference type="AGR" id="HGNC:52385"/>
<dbReference type="CTD" id="100131303"/>
<dbReference type="GeneCards" id="DPEP2NB"/>
<dbReference type="HGNC" id="HGNC:52385">
    <property type="gene designation" value="DPEP2NB"/>
</dbReference>
<dbReference type="HPA" id="ENSG00000263201">
    <property type="expression patterns" value="Tissue enriched (testis)"/>
</dbReference>
<dbReference type="neXtProt" id="NX_A0A0U1RQF7"/>
<dbReference type="VEuPathDB" id="HostDB:ENSG00000263201"/>
<dbReference type="GeneTree" id="ENSGT00740000117161"/>
<dbReference type="InParanoid" id="A0A0U1RQF7"/>
<dbReference type="OMA" id="MTDRILY"/>
<dbReference type="OrthoDB" id="9442052at2759"/>
<dbReference type="PAN-GO" id="A0A0U1RQF7">
    <property type="GO annotations" value="0 GO annotations based on evolutionary models"/>
</dbReference>
<dbReference type="PathwayCommons" id="A0A0U1RQF7"/>
<dbReference type="SignaLink" id="A0A0U1RQF7"/>
<dbReference type="BioGRID-ORCS" id="100131303">
    <property type="hits" value="6 hits in 108 CRISPR screens"/>
</dbReference>
<dbReference type="GenomeRNAi" id="100131303"/>
<dbReference type="Pharos" id="A0A0U1RQF7">
    <property type="development level" value="Tdark"/>
</dbReference>
<dbReference type="PRO" id="PR:A0A0U1RQF7"/>
<dbReference type="Proteomes" id="UP000005640">
    <property type="component" value="Chromosome 16"/>
</dbReference>
<dbReference type="RNAct" id="A0A0U1RQF7">
    <property type="molecule type" value="protein"/>
</dbReference>
<dbReference type="Bgee" id="ENSG00000263201">
    <property type="expression patterns" value="Expressed in tibialis anterior and 15 other cell types or tissues"/>
</dbReference>